<sequence length="968" mass="112135">MAFANFRRILRLSTFEKRKSREYEHVRRDLDPNEVWEIVGELGDGAFGKVYKAKNKETGALAAAKVIETKSEEELEDYIVEIEILATCDHPYIVKLLGAYYHDGKLWIMIEFCPGGAVDAIMLELDRGLTEPQIQVVCRQMLEALNFLHSKRIIHRDLKAGNVLMTLEGDIRLADFGVSAKNLKTLQKRDSFIGTPYWMAPEVVMCETMKDTPYDYKADIWSLGITLIEMAQIEPPHHELNPMRVLLKIAKSDPPTLLTPSKWSVEFRDFLKIALDKNPETRPSAAQLLEHPFVSSITSNKALRELVAEAKAEVMEEIEDGRDEGEEEDAVDAASTLENHTQNSSEVSPPSLNADKPLEESPSTPLAPSQSQDSVNEPCSQPSGDRSLQTTSPPVVAPGNENGLAVPVPLRKSRPVSMDARIQVAQEKQVAEQGGDLSPAANRSQKASQSRPNSSALETLGGEKLANGSLEPPAQAAPGPSKRDSDCSSLCTSESMDYGTNLSTDLSLNKEMGSLSIKDPKLYKKTLKRTRKFVVDGVEVSITTSKIISEDEKKDEEMRFLRRQELRELRLLQKEEHRNQTQLSNKHELQLEQMHKRFEQEINAKKKFFDTELENLERQQKQQVEKMEQDHAVRRREEARRIRLEQDRDYTRFQEQLKLMKKEVKNEVEKLPRQQRKESMKQKMEEHTQKKQLLDRDFVAKQKEDLELAMKRLTTDNRREICDKERECLMKKQELLRDREAALWEMEEHQLQERHQLVKQQLKDQYFLQRHELLRKHEKEREQMQRYNQRMIEQLKVRQQQEKARLPKIQRSEGKTRMAMYKKSLHINGGGSAAEQREKIKQFSQQEEKRQKSERLQQQQKHENQMRDMLAQCESNMSELQQLQNEKCHLLVEHETQKLKALDESHNQNLKEWRDKLRPRKKALEEDLNQKKREQEMFFKLSEEAECPNPSTPSKAAKFFPYSSADAS</sequence>
<keyword id="KW-0002">3D-structure</keyword>
<keyword id="KW-0067">ATP-binding</keyword>
<keyword id="KW-0131">Cell cycle</keyword>
<keyword id="KW-1003">Cell membrane</keyword>
<keyword id="KW-0175">Coiled coil</keyword>
<keyword id="KW-0418">Kinase</keyword>
<keyword id="KW-0472">Membrane</keyword>
<keyword id="KW-0547">Nucleotide-binding</keyword>
<keyword id="KW-0597">Phosphoprotein</keyword>
<keyword id="KW-1267">Proteomics identification</keyword>
<keyword id="KW-1185">Reference proteome</keyword>
<keyword id="KW-0723">Serine/threonine-protein kinase</keyword>
<keyword id="KW-0808">Transferase</keyword>
<dbReference type="EC" id="2.7.11.1"/>
<dbReference type="EMBL" id="AB015718">
    <property type="protein sequence ID" value="BAA35073.1"/>
    <property type="molecule type" value="mRNA"/>
</dbReference>
<dbReference type="EMBL" id="AK022960">
    <property type="protein sequence ID" value="BAG51143.1"/>
    <property type="status" value="ALT_INIT"/>
    <property type="molecule type" value="mRNA"/>
</dbReference>
<dbReference type="EMBL" id="AK313350">
    <property type="protein sequence ID" value="BAG36152.1"/>
    <property type="molecule type" value="mRNA"/>
</dbReference>
<dbReference type="EMBL" id="AC024561">
    <property type="status" value="NOT_ANNOTATED_CDS"/>
    <property type="molecule type" value="Genomic_DNA"/>
</dbReference>
<dbReference type="EMBL" id="CH471062">
    <property type="protein sequence ID" value="EAW61439.1"/>
    <property type="molecule type" value="Genomic_DNA"/>
</dbReference>
<dbReference type="EMBL" id="BC070077">
    <property type="protein sequence ID" value="AAH70077.1"/>
    <property type="molecule type" value="mRNA"/>
</dbReference>
<dbReference type="EMBL" id="AL133081">
    <property type="protein sequence ID" value="CAB61400.1"/>
    <property type="molecule type" value="mRNA"/>
</dbReference>
<dbReference type="CCDS" id="CCDS34290.1"/>
<dbReference type="PIR" id="T42687">
    <property type="entry name" value="T42687"/>
</dbReference>
<dbReference type="RefSeq" id="NP_005981.3">
    <property type="nucleotide sequence ID" value="NM_005990.3"/>
</dbReference>
<dbReference type="PDB" id="2J7T">
    <property type="method" value="X-ray"/>
    <property type="resolution" value="2.00 A"/>
    <property type="chains" value="A=18-317"/>
</dbReference>
<dbReference type="PDB" id="4AOT">
    <property type="method" value="X-ray"/>
    <property type="resolution" value="2.33 A"/>
    <property type="chains" value="A/B=18-317"/>
</dbReference>
<dbReference type="PDB" id="4BC6">
    <property type="method" value="X-ray"/>
    <property type="resolution" value="2.20 A"/>
    <property type="chains" value="A=24-316"/>
</dbReference>
<dbReference type="PDB" id="4EQU">
    <property type="method" value="X-ray"/>
    <property type="resolution" value="2.00 A"/>
    <property type="chains" value="A/B=18-317"/>
</dbReference>
<dbReference type="PDB" id="4USD">
    <property type="method" value="X-ray"/>
    <property type="resolution" value="3.05 A"/>
    <property type="chains" value="A/B=18-317"/>
</dbReference>
<dbReference type="PDB" id="4USE">
    <property type="method" value="X-ray"/>
    <property type="resolution" value="2.65 A"/>
    <property type="chains" value="A/B=18-317"/>
</dbReference>
<dbReference type="PDB" id="5AJQ">
    <property type="method" value="X-ray"/>
    <property type="resolution" value="2.20 A"/>
    <property type="chains" value="A/B=21-313"/>
</dbReference>
<dbReference type="PDB" id="5OWQ">
    <property type="method" value="X-ray"/>
    <property type="resolution" value="2.70 A"/>
    <property type="chains" value="A/B=18-317"/>
</dbReference>
<dbReference type="PDB" id="5OWR">
    <property type="method" value="X-ray"/>
    <property type="resolution" value="2.30 A"/>
    <property type="chains" value="A=18-317"/>
</dbReference>
<dbReference type="PDB" id="6EIM">
    <property type="method" value="X-ray"/>
    <property type="resolution" value="1.43 A"/>
    <property type="chains" value="A/B=18-317"/>
</dbReference>
<dbReference type="PDB" id="6GTT">
    <property type="method" value="X-ray"/>
    <property type="resolution" value="2.25 A"/>
    <property type="chains" value="A=18-317"/>
</dbReference>
<dbReference type="PDB" id="6HXF">
    <property type="method" value="X-ray"/>
    <property type="resolution" value="2.09 A"/>
    <property type="chains" value="A/B/C/D=18-317"/>
</dbReference>
<dbReference type="PDB" id="6I2Y">
    <property type="method" value="X-ray"/>
    <property type="resolution" value="2.56 A"/>
    <property type="chains" value="A/B=18-317"/>
</dbReference>
<dbReference type="PDB" id="7QGP">
    <property type="method" value="X-ray"/>
    <property type="resolution" value="1.90 A"/>
    <property type="chains" value="A=18-317"/>
</dbReference>
<dbReference type="PDBsum" id="2J7T"/>
<dbReference type="PDBsum" id="4AOT"/>
<dbReference type="PDBsum" id="4BC6"/>
<dbReference type="PDBsum" id="4EQU"/>
<dbReference type="PDBsum" id="4USD"/>
<dbReference type="PDBsum" id="4USE"/>
<dbReference type="PDBsum" id="5AJQ"/>
<dbReference type="PDBsum" id="5OWQ"/>
<dbReference type="PDBsum" id="5OWR"/>
<dbReference type="PDBsum" id="6EIM"/>
<dbReference type="PDBsum" id="6GTT"/>
<dbReference type="PDBsum" id="6HXF"/>
<dbReference type="PDBsum" id="6I2Y"/>
<dbReference type="PDBsum" id="7QGP"/>
<dbReference type="SMR" id="O94804"/>
<dbReference type="BioGRID" id="112669">
    <property type="interactions" value="59"/>
</dbReference>
<dbReference type="FunCoup" id="O94804">
    <property type="interactions" value="1696"/>
</dbReference>
<dbReference type="IntAct" id="O94804">
    <property type="interactions" value="12"/>
</dbReference>
<dbReference type="MINT" id="O94804"/>
<dbReference type="STRING" id="9606.ENSP00000176763"/>
<dbReference type="BindingDB" id="O94804"/>
<dbReference type="ChEMBL" id="CHEMBL3981"/>
<dbReference type="DrugBank" id="DB12010">
    <property type="generic name" value="Fostamatinib"/>
</dbReference>
<dbReference type="DrugCentral" id="O94804"/>
<dbReference type="GuidetoPHARMACOLOGY" id="2211"/>
<dbReference type="GlyGen" id="O94804">
    <property type="glycosylation" value="1 site"/>
</dbReference>
<dbReference type="iPTMnet" id="O94804"/>
<dbReference type="MetOSite" id="O94804"/>
<dbReference type="PhosphoSitePlus" id="O94804"/>
<dbReference type="BioMuta" id="STK10"/>
<dbReference type="CPTAC" id="CPTAC-2813"/>
<dbReference type="jPOST" id="O94804"/>
<dbReference type="MassIVE" id="O94804"/>
<dbReference type="PaxDb" id="9606-ENSP00000176763"/>
<dbReference type="PeptideAtlas" id="O94804"/>
<dbReference type="ProteomicsDB" id="50444"/>
<dbReference type="Pumba" id="O94804"/>
<dbReference type="Antibodypedia" id="28880">
    <property type="antibodies" value="279 antibodies from 32 providers"/>
</dbReference>
<dbReference type="DNASU" id="6793"/>
<dbReference type="Ensembl" id="ENST00000176763.10">
    <property type="protein sequence ID" value="ENSP00000176763.5"/>
    <property type="gene ID" value="ENSG00000072786.13"/>
</dbReference>
<dbReference type="GeneID" id="6793"/>
<dbReference type="KEGG" id="hsa:6793"/>
<dbReference type="MANE-Select" id="ENST00000176763.10">
    <property type="protein sequence ID" value="ENSP00000176763.5"/>
    <property type="RefSeq nucleotide sequence ID" value="NM_005990.4"/>
    <property type="RefSeq protein sequence ID" value="NP_005981.3"/>
</dbReference>
<dbReference type="UCSC" id="uc003mbo.2">
    <property type="organism name" value="human"/>
</dbReference>
<dbReference type="AGR" id="HGNC:11388"/>
<dbReference type="CTD" id="6793"/>
<dbReference type="DisGeNET" id="6793"/>
<dbReference type="GeneCards" id="STK10"/>
<dbReference type="HGNC" id="HGNC:11388">
    <property type="gene designation" value="STK10"/>
</dbReference>
<dbReference type="HPA" id="ENSG00000072786">
    <property type="expression patterns" value="Tissue enhanced (bone)"/>
</dbReference>
<dbReference type="MalaCards" id="STK10"/>
<dbReference type="MIM" id="273300">
    <property type="type" value="phenotype"/>
</dbReference>
<dbReference type="MIM" id="603919">
    <property type="type" value="gene"/>
</dbReference>
<dbReference type="neXtProt" id="NX_O94804"/>
<dbReference type="OpenTargets" id="ENSG00000072786"/>
<dbReference type="PharmGKB" id="PA36197"/>
<dbReference type="VEuPathDB" id="HostDB:ENSG00000072786"/>
<dbReference type="eggNOG" id="KOG0579">
    <property type="taxonomic scope" value="Eukaryota"/>
</dbReference>
<dbReference type="GeneTree" id="ENSGT00940000156818"/>
<dbReference type="HOGENOM" id="CLU_001965_3_0_1"/>
<dbReference type="InParanoid" id="O94804"/>
<dbReference type="OMA" id="CHMLVEN"/>
<dbReference type="OrthoDB" id="10027016at2759"/>
<dbReference type="PAN-GO" id="O94804">
    <property type="GO annotations" value="4 GO annotations based on evolutionary models"/>
</dbReference>
<dbReference type="PhylomeDB" id="O94804"/>
<dbReference type="TreeFam" id="TF351445"/>
<dbReference type="PathwayCommons" id="O94804"/>
<dbReference type="Reactome" id="R-HSA-6798695">
    <property type="pathway name" value="Neutrophil degranulation"/>
</dbReference>
<dbReference type="Reactome" id="R-HSA-8980692">
    <property type="pathway name" value="RHOA GTPase cycle"/>
</dbReference>
<dbReference type="Reactome" id="R-HSA-9013026">
    <property type="pathway name" value="RHOB GTPase cycle"/>
</dbReference>
<dbReference type="Reactome" id="R-HSA-9013106">
    <property type="pathway name" value="RHOC GTPase cycle"/>
</dbReference>
<dbReference type="SignaLink" id="O94804"/>
<dbReference type="SIGNOR" id="O94804"/>
<dbReference type="BioGRID-ORCS" id="6793">
    <property type="hits" value="14 hits in 1193 CRISPR screens"/>
</dbReference>
<dbReference type="ChiTaRS" id="STK10">
    <property type="organism name" value="human"/>
</dbReference>
<dbReference type="EvolutionaryTrace" id="O94804"/>
<dbReference type="GeneWiki" id="STK10"/>
<dbReference type="GenomeRNAi" id="6793"/>
<dbReference type="Pharos" id="O94804">
    <property type="development level" value="Tchem"/>
</dbReference>
<dbReference type="PRO" id="PR:O94804"/>
<dbReference type="Proteomes" id="UP000005640">
    <property type="component" value="Chromosome 5"/>
</dbReference>
<dbReference type="RNAct" id="O94804">
    <property type="molecule type" value="protein"/>
</dbReference>
<dbReference type="Bgee" id="ENSG00000072786">
    <property type="expression patterns" value="Expressed in granulocyte and 178 other cell types or tissues"/>
</dbReference>
<dbReference type="ExpressionAtlas" id="O94804">
    <property type="expression patterns" value="baseline and differential"/>
</dbReference>
<dbReference type="GO" id="GO:0005737">
    <property type="term" value="C:cytoplasm"/>
    <property type="evidence" value="ECO:0000318"/>
    <property type="project" value="GO_Central"/>
</dbReference>
<dbReference type="GO" id="GO:0005829">
    <property type="term" value="C:cytosol"/>
    <property type="evidence" value="ECO:0000304"/>
    <property type="project" value="Reactome"/>
</dbReference>
<dbReference type="GO" id="GO:0070062">
    <property type="term" value="C:extracellular exosome"/>
    <property type="evidence" value="ECO:0007005"/>
    <property type="project" value="UniProtKB"/>
</dbReference>
<dbReference type="GO" id="GO:0016604">
    <property type="term" value="C:nuclear body"/>
    <property type="evidence" value="ECO:0000314"/>
    <property type="project" value="HPA"/>
</dbReference>
<dbReference type="GO" id="GO:0005654">
    <property type="term" value="C:nucleoplasm"/>
    <property type="evidence" value="ECO:0000314"/>
    <property type="project" value="HPA"/>
</dbReference>
<dbReference type="GO" id="GO:0005886">
    <property type="term" value="C:plasma membrane"/>
    <property type="evidence" value="ECO:0000314"/>
    <property type="project" value="UniProtKB"/>
</dbReference>
<dbReference type="GO" id="GO:0035579">
    <property type="term" value="C:specific granule membrane"/>
    <property type="evidence" value="ECO:0000304"/>
    <property type="project" value="Reactome"/>
</dbReference>
<dbReference type="GO" id="GO:0005524">
    <property type="term" value="F:ATP binding"/>
    <property type="evidence" value="ECO:0007669"/>
    <property type="project" value="UniProtKB-KW"/>
</dbReference>
<dbReference type="GO" id="GO:0042802">
    <property type="term" value="F:identical protein binding"/>
    <property type="evidence" value="ECO:0000353"/>
    <property type="project" value="IntAct"/>
</dbReference>
<dbReference type="GO" id="GO:0042803">
    <property type="term" value="F:protein homodimerization activity"/>
    <property type="evidence" value="ECO:0000314"/>
    <property type="project" value="UniProtKB"/>
</dbReference>
<dbReference type="GO" id="GO:0106310">
    <property type="term" value="F:protein serine kinase activity"/>
    <property type="evidence" value="ECO:0007669"/>
    <property type="project" value="RHEA"/>
</dbReference>
<dbReference type="GO" id="GO:0004674">
    <property type="term" value="F:protein serine/threonine kinase activity"/>
    <property type="evidence" value="ECO:0000314"/>
    <property type="project" value="UniProtKB"/>
</dbReference>
<dbReference type="GO" id="GO:0035556">
    <property type="term" value="P:intracellular signal transduction"/>
    <property type="evidence" value="ECO:0000318"/>
    <property type="project" value="GO_Central"/>
</dbReference>
<dbReference type="GO" id="GO:0071593">
    <property type="term" value="P:lymphocyte aggregation"/>
    <property type="evidence" value="ECO:0007669"/>
    <property type="project" value="Ensembl"/>
</dbReference>
<dbReference type="GO" id="GO:0046777">
    <property type="term" value="P:protein autophosphorylation"/>
    <property type="evidence" value="ECO:0000314"/>
    <property type="project" value="UniProtKB"/>
</dbReference>
<dbReference type="GO" id="GO:0006468">
    <property type="term" value="P:protein phosphorylation"/>
    <property type="evidence" value="ECO:0000304"/>
    <property type="project" value="ProtInc"/>
</dbReference>
<dbReference type="GO" id="GO:2000401">
    <property type="term" value="P:regulation of lymphocyte migration"/>
    <property type="evidence" value="ECO:0000315"/>
    <property type="project" value="UniProtKB"/>
</dbReference>
<dbReference type="CDD" id="cd06644">
    <property type="entry name" value="STKc_STK10"/>
    <property type="match status" value="1"/>
</dbReference>
<dbReference type="FunFam" id="1.10.510.10:FF:000081">
    <property type="entry name" value="STE20-like serine/threonine-protein kinase"/>
    <property type="match status" value="1"/>
</dbReference>
<dbReference type="FunFam" id="3.30.200.20:FF:000120">
    <property type="entry name" value="STE20-like serine/threonine-protein kinase"/>
    <property type="match status" value="1"/>
</dbReference>
<dbReference type="Gene3D" id="3.30.200.20">
    <property type="entry name" value="Phosphorylase Kinase, domain 1"/>
    <property type="match status" value="1"/>
</dbReference>
<dbReference type="Gene3D" id="1.10.510.10">
    <property type="entry name" value="Transferase(Phosphotransferase) domain 1"/>
    <property type="match status" value="1"/>
</dbReference>
<dbReference type="InterPro" id="IPR011009">
    <property type="entry name" value="Kinase-like_dom_sf"/>
</dbReference>
<dbReference type="InterPro" id="IPR022165">
    <property type="entry name" value="PKK"/>
</dbReference>
<dbReference type="InterPro" id="IPR000719">
    <property type="entry name" value="Prot_kinase_dom"/>
</dbReference>
<dbReference type="InterPro" id="IPR017441">
    <property type="entry name" value="Protein_kinase_ATP_BS"/>
</dbReference>
<dbReference type="InterPro" id="IPR008271">
    <property type="entry name" value="Ser/Thr_kinase_AS"/>
</dbReference>
<dbReference type="InterPro" id="IPR051585">
    <property type="entry name" value="STE20_Ser/Thr_Kinases"/>
</dbReference>
<dbReference type="InterPro" id="IPR042743">
    <property type="entry name" value="STK10_STKc"/>
</dbReference>
<dbReference type="PANTHER" id="PTHR46538:SF2">
    <property type="entry name" value="NON-SPECIFIC SERINE_THREONINE PROTEIN KINASE"/>
    <property type="match status" value="1"/>
</dbReference>
<dbReference type="PANTHER" id="PTHR46538">
    <property type="entry name" value="PROTEIN KINASE DOMAIN-CONTAINING PROTEIN"/>
    <property type="match status" value="1"/>
</dbReference>
<dbReference type="Pfam" id="PF00069">
    <property type="entry name" value="Pkinase"/>
    <property type="match status" value="1"/>
</dbReference>
<dbReference type="Pfam" id="PF12474">
    <property type="entry name" value="PKK"/>
    <property type="match status" value="2"/>
</dbReference>
<dbReference type="SMART" id="SM00220">
    <property type="entry name" value="S_TKc"/>
    <property type="match status" value="1"/>
</dbReference>
<dbReference type="SUPFAM" id="SSF56112">
    <property type="entry name" value="Protein kinase-like (PK-like)"/>
    <property type="match status" value="1"/>
</dbReference>
<dbReference type="PROSITE" id="PS00107">
    <property type="entry name" value="PROTEIN_KINASE_ATP"/>
    <property type="match status" value="1"/>
</dbReference>
<dbReference type="PROSITE" id="PS50011">
    <property type="entry name" value="PROTEIN_KINASE_DOM"/>
    <property type="match status" value="1"/>
</dbReference>
<dbReference type="PROSITE" id="PS00108">
    <property type="entry name" value="PROTEIN_KINASE_ST"/>
    <property type="match status" value="1"/>
</dbReference>
<gene>
    <name type="primary">STK10</name>
    <name type="synonym">LOK</name>
</gene>
<accession>O94804</accession>
<accession>A6ND35</accession>
<accession>B2R8F5</accession>
<accession>B3KMY1</accession>
<accession>Q6NSK0</accession>
<accession>Q9UIW4</accession>
<evidence type="ECO:0000250" key="1">
    <source>
        <dbReference type="UniProtKB" id="E9PTG8"/>
    </source>
</evidence>
<evidence type="ECO:0000255" key="2"/>
<evidence type="ECO:0000255" key="3">
    <source>
        <dbReference type="PROSITE-ProRule" id="PRU00159"/>
    </source>
</evidence>
<evidence type="ECO:0000255" key="4">
    <source>
        <dbReference type="PROSITE-ProRule" id="PRU10027"/>
    </source>
</evidence>
<evidence type="ECO:0000256" key="5">
    <source>
        <dbReference type="SAM" id="MobiDB-lite"/>
    </source>
</evidence>
<evidence type="ECO:0000269" key="6">
    <source>
    </source>
</evidence>
<evidence type="ECO:0000269" key="7">
    <source>
    </source>
</evidence>
<evidence type="ECO:0000269" key="8">
    <source>
    </source>
</evidence>
<evidence type="ECO:0000269" key="9">
    <source>
    </source>
</evidence>
<evidence type="ECO:0000269" key="10">
    <source>
    </source>
</evidence>
<evidence type="ECO:0000269" key="11">
    <source>
    </source>
</evidence>
<evidence type="ECO:0000269" key="12">
    <source>
    </source>
</evidence>
<evidence type="ECO:0000305" key="13"/>
<evidence type="ECO:0000305" key="14">
    <source>
    </source>
</evidence>
<evidence type="ECO:0007744" key="15">
    <source>
        <dbReference type="PDB" id="2J7T"/>
    </source>
</evidence>
<evidence type="ECO:0007744" key="16">
    <source>
    </source>
</evidence>
<evidence type="ECO:0007744" key="17">
    <source>
    </source>
</evidence>
<evidence type="ECO:0007744" key="18">
    <source>
    </source>
</evidence>
<evidence type="ECO:0007744" key="19">
    <source>
    </source>
</evidence>
<evidence type="ECO:0007744" key="20">
    <source>
    </source>
</evidence>
<evidence type="ECO:0007744" key="21">
    <source>
    </source>
</evidence>
<evidence type="ECO:0007744" key="22">
    <source>
    </source>
</evidence>
<evidence type="ECO:0007744" key="23">
    <source>
    </source>
</evidence>
<evidence type="ECO:0007744" key="24">
    <source>
    </source>
</evidence>
<evidence type="ECO:0007829" key="25">
    <source>
        <dbReference type="PDB" id="6EIM"/>
    </source>
</evidence>
<evidence type="ECO:0007829" key="26">
    <source>
        <dbReference type="PDB" id="6GTT"/>
    </source>
</evidence>
<evidence type="ECO:0007829" key="27">
    <source>
        <dbReference type="PDB" id="7QGP"/>
    </source>
</evidence>
<comment type="function">
    <text evidence="6 7 11">Serine/threonine-protein kinase involved in regulation of lymphocyte migration. Phosphorylates MSN, and possibly PLK1. Involved in regulation of lymphocyte migration by mediating phosphorylation of ERM proteins such as MSN. Acts as a negative regulator of MAP3K1/MEKK1. May also act as a cell cycle regulator by acting as a polo kinase kinase: mediates phosphorylation of PLK1 in vitro; however such data require additional evidences in vivo.</text>
</comment>
<comment type="catalytic activity">
    <reaction evidence="10">
        <text>L-seryl-[protein] + ATP = O-phospho-L-seryl-[protein] + ADP + H(+)</text>
        <dbReference type="Rhea" id="RHEA:17989"/>
        <dbReference type="Rhea" id="RHEA-COMP:9863"/>
        <dbReference type="Rhea" id="RHEA-COMP:11604"/>
        <dbReference type="ChEBI" id="CHEBI:15378"/>
        <dbReference type="ChEBI" id="CHEBI:29999"/>
        <dbReference type="ChEBI" id="CHEBI:30616"/>
        <dbReference type="ChEBI" id="CHEBI:83421"/>
        <dbReference type="ChEBI" id="CHEBI:456216"/>
        <dbReference type="EC" id="2.7.11.1"/>
    </reaction>
</comment>
<comment type="catalytic activity">
    <reaction evidence="10">
        <text>L-threonyl-[protein] + ATP = O-phospho-L-threonyl-[protein] + ADP + H(+)</text>
        <dbReference type="Rhea" id="RHEA:46608"/>
        <dbReference type="Rhea" id="RHEA-COMP:11060"/>
        <dbReference type="Rhea" id="RHEA-COMP:11605"/>
        <dbReference type="ChEBI" id="CHEBI:15378"/>
        <dbReference type="ChEBI" id="CHEBI:30013"/>
        <dbReference type="ChEBI" id="CHEBI:30616"/>
        <dbReference type="ChEBI" id="CHEBI:61977"/>
        <dbReference type="ChEBI" id="CHEBI:456216"/>
        <dbReference type="EC" id="2.7.11.1"/>
    </reaction>
</comment>
<comment type="activity regulation">
    <text evidence="10 12">Inhibited by the pyrrole-indolinone inhibitor SU11274 (K00593): intercalates between the ATP-binding Lys-65 and alpha-C glutamate (Glu-81), resulting in a partial disordering of the lysine side chain. Also specifically inhibited by erlotinib. Slightly inhibited by gefitinib.</text>
</comment>
<comment type="subunit">
    <text evidence="10">Homodimer; homodimerization is required for activation segment autophosphorylation.</text>
</comment>
<comment type="interaction">
    <interactant intactId="EBI-3951541">
        <id>O94804</id>
    </interactant>
    <interactant intactId="EBI-3951541">
        <id>O94804</id>
        <label>STK10</label>
    </interactant>
    <organismsDiffer>false</organismsDiffer>
    <experiments>3</experiments>
</comment>
<comment type="subcellular location">
    <subcellularLocation>
        <location evidence="11">Cell membrane</location>
        <topology evidence="11">Peripheral membrane protein</topology>
    </subcellularLocation>
</comment>
<comment type="tissue specificity">
    <text evidence="7">Highly expressed in rapidly proliferating tissues (spleen, placenta, and peripheral blood leukocytes). Also expressed in brain, heart, skeletal muscle, colon, thymus, kidney, liver, small intestine and lung.</text>
</comment>
<comment type="PTM">
    <text>Autophosphorylates following homodimerization, leading to activation of the protein.</text>
</comment>
<comment type="disease" evidence="8">
    <disease id="DI-02749">
        <name>Testicular germ cell tumor</name>
        <acronym>TGCT</acronym>
        <description>A common malignancy in males representing 95% of all testicular neoplasms. TGCTs have various pathologic subtypes including: unclassified intratubular germ cell neoplasia, seminoma (including cases with syncytiotrophoblastic cells), spermatocytic seminoma, embryonal carcinoma, yolk sac tumor, choriocarcinoma, and teratoma.</description>
        <dbReference type="MIM" id="273300"/>
    </disease>
    <text>The disease may be caused by variants affecting the gene represented in this entry.</text>
</comment>
<comment type="miscellaneous">
    <text evidence="14">Inhibition by erlotinib, an orally administered EGFR tyrosine kinase inhibitor used for treatment, enhances STK10-dependent lymphocytic responses, possibly leading to the aggravation of skin inflammation observed upon treatment by erlotinib.</text>
</comment>
<comment type="similarity">
    <text evidence="13">Belongs to the protein kinase superfamily. STE Ser/Thr protein kinase family. STE20 subfamily.</text>
</comment>
<comment type="sequence caution" evidence="13">
    <conflict type="erroneous initiation">
        <sequence resource="EMBL-CDS" id="BAG51143"/>
    </conflict>
    <text>Truncated N-terminus.</text>
</comment>
<organism>
    <name type="scientific">Homo sapiens</name>
    <name type="common">Human</name>
    <dbReference type="NCBI Taxonomy" id="9606"/>
    <lineage>
        <taxon>Eukaryota</taxon>
        <taxon>Metazoa</taxon>
        <taxon>Chordata</taxon>
        <taxon>Craniata</taxon>
        <taxon>Vertebrata</taxon>
        <taxon>Euteleostomi</taxon>
        <taxon>Mammalia</taxon>
        <taxon>Eutheria</taxon>
        <taxon>Euarchontoglires</taxon>
        <taxon>Primates</taxon>
        <taxon>Haplorrhini</taxon>
        <taxon>Catarrhini</taxon>
        <taxon>Hominidae</taxon>
        <taxon>Homo</taxon>
    </lineage>
</organism>
<protein>
    <recommendedName>
        <fullName>Serine/threonine-protein kinase 10</fullName>
        <ecNumber>2.7.11.1</ecNumber>
    </recommendedName>
    <alternativeName>
        <fullName>Lymphocyte-oriented kinase</fullName>
    </alternativeName>
</protein>
<reference key="1">
    <citation type="journal article" date="1999" name="Immunogenetics">
        <title>Molecular cloning of the human gene STK10 encoding lymphocyte-oriented kinase, and comparative chromosomal mapping of the human, mouse, and rat homologues.</title>
        <authorList>
            <person name="Kuramochi S."/>
            <person name="Matsuda Y."/>
            <person name="Okamoto M."/>
            <person name="Kitamura F."/>
            <person name="Yonekawa H."/>
            <person name="Karasuyama H."/>
        </authorList>
    </citation>
    <scope>NUCLEOTIDE SEQUENCE [MRNA]</scope>
</reference>
<reference key="2">
    <citation type="journal article" date="2004" name="Nat. Genet.">
        <title>Complete sequencing and characterization of 21,243 full-length human cDNAs.</title>
        <authorList>
            <person name="Ota T."/>
            <person name="Suzuki Y."/>
            <person name="Nishikawa T."/>
            <person name="Otsuki T."/>
            <person name="Sugiyama T."/>
            <person name="Irie R."/>
            <person name="Wakamatsu A."/>
            <person name="Hayashi K."/>
            <person name="Sato H."/>
            <person name="Nagai K."/>
            <person name="Kimura K."/>
            <person name="Makita H."/>
            <person name="Sekine M."/>
            <person name="Obayashi M."/>
            <person name="Nishi T."/>
            <person name="Shibahara T."/>
            <person name="Tanaka T."/>
            <person name="Ishii S."/>
            <person name="Yamamoto J."/>
            <person name="Saito K."/>
            <person name="Kawai Y."/>
            <person name="Isono Y."/>
            <person name="Nakamura Y."/>
            <person name="Nagahari K."/>
            <person name="Murakami K."/>
            <person name="Yasuda T."/>
            <person name="Iwayanagi T."/>
            <person name="Wagatsuma M."/>
            <person name="Shiratori A."/>
            <person name="Sudo H."/>
            <person name="Hosoiri T."/>
            <person name="Kaku Y."/>
            <person name="Kodaira H."/>
            <person name="Kondo H."/>
            <person name="Sugawara M."/>
            <person name="Takahashi M."/>
            <person name="Kanda K."/>
            <person name="Yokoi T."/>
            <person name="Furuya T."/>
            <person name="Kikkawa E."/>
            <person name="Omura Y."/>
            <person name="Abe K."/>
            <person name="Kamihara K."/>
            <person name="Katsuta N."/>
            <person name="Sato K."/>
            <person name="Tanikawa M."/>
            <person name="Yamazaki M."/>
            <person name="Ninomiya K."/>
            <person name="Ishibashi T."/>
            <person name="Yamashita H."/>
            <person name="Murakawa K."/>
            <person name="Fujimori K."/>
            <person name="Tanai H."/>
            <person name="Kimata M."/>
            <person name="Watanabe M."/>
            <person name="Hiraoka S."/>
            <person name="Chiba Y."/>
            <person name="Ishida S."/>
            <person name="Ono Y."/>
            <person name="Takiguchi S."/>
            <person name="Watanabe S."/>
            <person name="Yosida M."/>
            <person name="Hotuta T."/>
            <person name="Kusano J."/>
            <person name="Kanehori K."/>
            <person name="Takahashi-Fujii A."/>
            <person name="Hara H."/>
            <person name="Tanase T.-O."/>
            <person name="Nomura Y."/>
            <person name="Togiya S."/>
            <person name="Komai F."/>
            <person name="Hara R."/>
            <person name="Takeuchi K."/>
            <person name="Arita M."/>
            <person name="Imose N."/>
            <person name="Musashino K."/>
            <person name="Yuuki H."/>
            <person name="Oshima A."/>
            <person name="Sasaki N."/>
            <person name="Aotsuka S."/>
            <person name="Yoshikawa Y."/>
            <person name="Matsunawa H."/>
            <person name="Ichihara T."/>
            <person name="Shiohata N."/>
            <person name="Sano S."/>
            <person name="Moriya S."/>
            <person name="Momiyama H."/>
            <person name="Satoh N."/>
            <person name="Takami S."/>
            <person name="Terashima Y."/>
            <person name="Suzuki O."/>
            <person name="Nakagawa S."/>
            <person name="Senoh A."/>
            <person name="Mizoguchi H."/>
            <person name="Goto Y."/>
            <person name="Shimizu F."/>
            <person name="Wakebe H."/>
            <person name="Hishigaki H."/>
            <person name="Watanabe T."/>
            <person name="Sugiyama A."/>
            <person name="Takemoto M."/>
            <person name="Kawakami B."/>
            <person name="Yamazaki M."/>
            <person name="Watanabe K."/>
            <person name="Kumagai A."/>
            <person name="Itakura S."/>
            <person name="Fukuzumi Y."/>
            <person name="Fujimori Y."/>
            <person name="Komiyama M."/>
            <person name="Tashiro H."/>
            <person name="Tanigami A."/>
            <person name="Fujiwara T."/>
            <person name="Ono T."/>
            <person name="Yamada K."/>
            <person name="Fujii Y."/>
            <person name="Ozaki K."/>
            <person name="Hirao M."/>
            <person name="Ohmori Y."/>
            <person name="Kawabata A."/>
            <person name="Hikiji T."/>
            <person name="Kobatake N."/>
            <person name="Inagaki H."/>
            <person name="Ikema Y."/>
            <person name="Okamoto S."/>
            <person name="Okitani R."/>
            <person name="Kawakami T."/>
            <person name="Noguchi S."/>
            <person name="Itoh T."/>
            <person name="Shigeta K."/>
            <person name="Senba T."/>
            <person name="Matsumura K."/>
            <person name="Nakajima Y."/>
            <person name="Mizuno T."/>
            <person name="Morinaga M."/>
            <person name="Sasaki M."/>
            <person name="Togashi T."/>
            <person name="Oyama M."/>
            <person name="Hata H."/>
            <person name="Watanabe M."/>
            <person name="Komatsu T."/>
            <person name="Mizushima-Sugano J."/>
            <person name="Satoh T."/>
            <person name="Shirai Y."/>
            <person name="Takahashi Y."/>
            <person name="Nakagawa K."/>
            <person name="Okumura K."/>
            <person name="Nagase T."/>
            <person name="Nomura N."/>
            <person name="Kikuchi H."/>
            <person name="Masuho Y."/>
            <person name="Yamashita R."/>
            <person name="Nakai K."/>
            <person name="Yada T."/>
            <person name="Nakamura Y."/>
            <person name="Ohara O."/>
            <person name="Isogai T."/>
            <person name="Sugano S."/>
        </authorList>
    </citation>
    <scope>NUCLEOTIDE SEQUENCE [LARGE SCALE MRNA]</scope>
    <source>
        <tissue>Teratocarcinoma</tissue>
        <tissue>Testis</tissue>
    </source>
</reference>
<reference key="3">
    <citation type="journal article" date="2004" name="Nature">
        <title>The DNA sequence and comparative analysis of human chromosome 5.</title>
        <authorList>
            <person name="Schmutz J."/>
            <person name="Martin J."/>
            <person name="Terry A."/>
            <person name="Couronne O."/>
            <person name="Grimwood J."/>
            <person name="Lowry S."/>
            <person name="Gordon L.A."/>
            <person name="Scott D."/>
            <person name="Xie G."/>
            <person name="Huang W."/>
            <person name="Hellsten U."/>
            <person name="Tran-Gyamfi M."/>
            <person name="She X."/>
            <person name="Prabhakar S."/>
            <person name="Aerts A."/>
            <person name="Altherr M."/>
            <person name="Bajorek E."/>
            <person name="Black S."/>
            <person name="Branscomb E."/>
            <person name="Caoile C."/>
            <person name="Challacombe J.F."/>
            <person name="Chan Y.M."/>
            <person name="Denys M."/>
            <person name="Detter J.C."/>
            <person name="Escobar J."/>
            <person name="Flowers D."/>
            <person name="Fotopulos D."/>
            <person name="Glavina T."/>
            <person name="Gomez M."/>
            <person name="Gonzales E."/>
            <person name="Goodstein D."/>
            <person name="Grigoriev I."/>
            <person name="Groza M."/>
            <person name="Hammon N."/>
            <person name="Hawkins T."/>
            <person name="Haydu L."/>
            <person name="Israni S."/>
            <person name="Jett J."/>
            <person name="Kadner K."/>
            <person name="Kimball H."/>
            <person name="Kobayashi A."/>
            <person name="Lopez F."/>
            <person name="Lou Y."/>
            <person name="Martinez D."/>
            <person name="Medina C."/>
            <person name="Morgan J."/>
            <person name="Nandkeshwar R."/>
            <person name="Noonan J.P."/>
            <person name="Pitluck S."/>
            <person name="Pollard M."/>
            <person name="Predki P."/>
            <person name="Priest J."/>
            <person name="Ramirez L."/>
            <person name="Retterer J."/>
            <person name="Rodriguez A."/>
            <person name="Rogers S."/>
            <person name="Salamov A."/>
            <person name="Salazar A."/>
            <person name="Thayer N."/>
            <person name="Tice H."/>
            <person name="Tsai M."/>
            <person name="Ustaszewska A."/>
            <person name="Vo N."/>
            <person name="Wheeler J."/>
            <person name="Wu K."/>
            <person name="Yang J."/>
            <person name="Dickson M."/>
            <person name="Cheng J.-F."/>
            <person name="Eichler E.E."/>
            <person name="Olsen A."/>
            <person name="Pennacchio L.A."/>
            <person name="Rokhsar D.S."/>
            <person name="Richardson P."/>
            <person name="Lucas S.M."/>
            <person name="Myers R.M."/>
            <person name="Rubin E.M."/>
        </authorList>
    </citation>
    <scope>NUCLEOTIDE SEQUENCE [LARGE SCALE GENOMIC DNA]</scope>
</reference>
<reference key="4">
    <citation type="submission" date="2005-07" db="EMBL/GenBank/DDBJ databases">
        <authorList>
            <person name="Mural R.J."/>
            <person name="Istrail S."/>
            <person name="Sutton G.G."/>
            <person name="Florea L."/>
            <person name="Halpern A.L."/>
            <person name="Mobarry C.M."/>
            <person name="Lippert R."/>
            <person name="Walenz B."/>
            <person name="Shatkay H."/>
            <person name="Dew I."/>
            <person name="Miller J.R."/>
            <person name="Flanigan M.J."/>
            <person name="Edwards N.J."/>
            <person name="Bolanos R."/>
            <person name="Fasulo D."/>
            <person name="Halldorsson B.V."/>
            <person name="Hannenhalli S."/>
            <person name="Turner R."/>
            <person name="Yooseph S."/>
            <person name="Lu F."/>
            <person name="Nusskern D.R."/>
            <person name="Shue B.C."/>
            <person name="Zheng X.H."/>
            <person name="Zhong F."/>
            <person name="Delcher A.L."/>
            <person name="Huson D.H."/>
            <person name="Kravitz S.A."/>
            <person name="Mouchard L."/>
            <person name="Reinert K."/>
            <person name="Remington K.A."/>
            <person name="Clark A.G."/>
            <person name="Waterman M.S."/>
            <person name="Eichler E.E."/>
            <person name="Adams M.D."/>
            <person name="Hunkapiller M.W."/>
            <person name="Myers E.W."/>
            <person name="Venter J.C."/>
        </authorList>
    </citation>
    <scope>NUCLEOTIDE SEQUENCE [LARGE SCALE GENOMIC DNA]</scope>
</reference>
<reference key="5">
    <citation type="journal article" date="2004" name="Genome Res.">
        <title>The status, quality, and expansion of the NIH full-length cDNA project: the Mammalian Gene Collection (MGC).</title>
        <authorList>
            <consortium name="The MGC Project Team"/>
        </authorList>
    </citation>
    <scope>NUCLEOTIDE SEQUENCE [LARGE SCALE MRNA]</scope>
    <source>
        <tissue>Testis</tissue>
    </source>
</reference>
<reference key="6">
    <citation type="journal article" date="2007" name="BMC Genomics">
        <title>The full-ORF clone resource of the German cDNA consortium.</title>
        <authorList>
            <person name="Bechtel S."/>
            <person name="Rosenfelder H."/>
            <person name="Duda A."/>
            <person name="Schmidt C.P."/>
            <person name="Ernst U."/>
            <person name="Wellenreuther R."/>
            <person name="Mehrle A."/>
            <person name="Schuster C."/>
            <person name="Bahr A."/>
            <person name="Bloecker H."/>
            <person name="Heubner D."/>
            <person name="Hoerlein A."/>
            <person name="Michel G."/>
            <person name="Wedler H."/>
            <person name="Koehrer K."/>
            <person name="Ottenwaelder B."/>
            <person name="Poustka A."/>
            <person name="Wiemann S."/>
            <person name="Schupp I."/>
        </authorList>
    </citation>
    <scope>NUCLEOTIDE SEQUENCE [LARGE SCALE MRNA] OF 814-968</scope>
    <source>
        <tissue>Testis</tissue>
    </source>
</reference>
<reference key="7">
    <citation type="journal article" date="2002" name="Biochem. J.">
        <title>Opposing roles of serine/threonine kinases MEKK1 and LOK in regulating the CD28 responsive element in T-cells.</title>
        <authorList>
            <person name="Tao L."/>
            <person name="Wadsworth S."/>
            <person name="Mercer J."/>
            <person name="Mueller C."/>
            <person name="Lynn K."/>
            <person name="Siekierka J."/>
            <person name="August A."/>
        </authorList>
    </citation>
    <scope>FUNCTION</scope>
</reference>
<reference key="8">
    <citation type="journal article" date="2003" name="J. Biol. Chem.">
        <title>Stk10, a new member of the polo-like kinase kinase family highly expressed in hematopoietic tissue.</title>
        <authorList>
            <person name="Walter S.A."/>
            <person name="Cutler R.E. Jr."/>
            <person name="Martinez R."/>
            <person name="Gishizky M."/>
            <person name="Hill R.J."/>
        </authorList>
    </citation>
    <scope>FUNCTION</scope>
    <scope>TISSUE SPECIFICITY</scope>
    <scope>MUTAGENESIS OF LYS-65</scope>
</reference>
<reference key="9">
    <citation type="journal article" date="2006" name="Nat. Biotechnol.">
        <title>A probability-based approach for high-throughput protein phosphorylation analysis and site localization.</title>
        <authorList>
            <person name="Beausoleil S.A."/>
            <person name="Villen J."/>
            <person name="Gerber S.A."/>
            <person name="Rush J."/>
            <person name="Gygi S.P."/>
        </authorList>
    </citation>
    <scope>PHOSPHORYLATION [LARGE SCALE ANALYSIS] AT SER-438</scope>
    <scope>IDENTIFICATION BY MASS SPECTROMETRY [LARGE SCALE ANALYSIS]</scope>
    <source>
        <tissue>Cervix carcinoma</tissue>
    </source>
</reference>
<reference key="10">
    <citation type="journal article" date="2008" name="J. Proteome Res.">
        <title>Phosphorylation analysis of primary human T lymphocytes using sequential IMAC and titanium oxide enrichment.</title>
        <authorList>
            <person name="Carrascal M."/>
            <person name="Ovelleiro D."/>
            <person name="Casas V."/>
            <person name="Gay M."/>
            <person name="Abian J."/>
        </authorList>
    </citation>
    <scope>PHOSPHORYLATION [LARGE SCALE ANALYSIS] AT SER-438</scope>
    <scope>IDENTIFICATION BY MASS SPECTROMETRY [LARGE SCALE ANALYSIS]</scope>
    <source>
        <tissue>T-cell</tissue>
    </source>
</reference>
<reference key="11">
    <citation type="journal article" date="2008" name="J. Proteome Res.">
        <title>Phosphoproteome of resting human platelets.</title>
        <authorList>
            <person name="Zahedi R.P."/>
            <person name="Lewandrowski U."/>
            <person name="Wiesner J."/>
            <person name="Wortelkamp S."/>
            <person name="Moebius J."/>
            <person name="Schuetz C."/>
            <person name="Walter U."/>
            <person name="Gambaryan S."/>
            <person name="Sickmann A."/>
        </authorList>
    </citation>
    <scope>PHOSPHORYLATION [LARGE SCALE ANALYSIS] AT SER-438</scope>
    <scope>IDENTIFICATION BY MASS SPECTROMETRY [LARGE SCALE ANALYSIS]</scope>
    <source>
        <tissue>Platelet</tissue>
    </source>
</reference>
<reference key="12">
    <citation type="journal article" date="2008" name="Mol. Cell">
        <title>Kinase-selective enrichment enables quantitative phosphoproteomics of the kinome across the cell cycle.</title>
        <authorList>
            <person name="Daub H."/>
            <person name="Olsen J.V."/>
            <person name="Bairlein M."/>
            <person name="Gnad F."/>
            <person name="Oppermann F.S."/>
            <person name="Korner R."/>
            <person name="Greff Z."/>
            <person name="Keri G."/>
            <person name="Stemmann O."/>
            <person name="Mann M."/>
        </authorList>
    </citation>
    <scope>PHOSPHORYLATION [LARGE SCALE ANALYSIS] AT SER-191 AND SER-438</scope>
    <scope>IDENTIFICATION BY MASS SPECTROMETRY [LARGE SCALE ANALYSIS]</scope>
    <source>
        <tissue>Cervix carcinoma</tissue>
    </source>
</reference>
<reference key="13">
    <citation type="journal article" date="2008" name="Proc. Natl. Acad. Sci. U.S.A.">
        <title>A quantitative atlas of mitotic phosphorylation.</title>
        <authorList>
            <person name="Dephoure N."/>
            <person name="Zhou C."/>
            <person name="Villen J."/>
            <person name="Beausoleil S.A."/>
            <person name="Bakalarski C.E."/>
            <person name="Elledge S.J."/>
            <person name="Gygi S.P."/>
        </authorList>
    </citation>
    <scope>PHOSPHORYLATION [LARGE SCALE ANALYSIS] AT SER-13; SER-191; SER-454 AND THR-952</scope>
    <scope>IDENTIFICATION BY MASS SPECTROMETRY [LARGE SCALE ANALYSIS]</scope>
    <source>
        <tissue>Cervix carcinoma</tissue>
    </source>
</reference>
<reference key="14">
    <citation type="journal article" date="2009" name="Anal. Chem.">
        <title>Lys-N and trypsin cover complementary parts of the phosphoproteome in a refined SCX-based approach.</title>
        <authorList>
            <person name="Gauci S."/>
            <person name="Helbig A.O."/>
            <person name="Slijper M."/>
            <person name="Krijgsveld J."/>
            <person name="Heck A.J."/>
            <person name="Mohammed S."/>
        </authorList>
    </citation>
    <scope>IDENTIFICATION BY MASS SPECTROMETRY [LARGE SCALE ANALYSIS]</scope>
</reference>
<reference key="15">
    <citation type="journal article" date="2009" name="Mol. Cell. Proteomics">
        <title>Large-scale proteomics analysis of the human kinome.</title>
        <authorList>
            <person name="Oppermann F.S."/>
            <person name="Gnad F."/>
            <person name="Olsen J.V."/>
            <person name="Hornberger R."/>
            <person name="Greff Z."/>
            <person name="Keri G."/>
            <person name="Mann M."/>
            <person name="Daub H."/>
        </authorList>
    </citation>
    <scope>PHOSPHORYLATION [LARGE SCALE ANALYSIS] AT SER-191; SER-438 AND SER-549</scope>
    <scope>IDENTIFICATION BY MASS SPECTROMETRY [LARGE SCALE ANALYSIS]</scope>
</reference>
<reference key="16">
    <citation type="journal article" date="2009" name="Proc. Natl. Acad. Sci. U.S.A.">
        <title>LOK is a major ERM kinase in resting lymphocytes and regulates cytoskeletal rearrangement through ERM phosphorylation.</title>
        <authorList>
            <person name="Belkina N.V."/>
            <person name="Liu Y."/>
            <person name="Hao J.J."/>
            <person name="Karasuyama H."/>
            <person name="Shaw S."/>
        </authorList>
    </citation>
    <scope>FUNCTION</scope>
    <scope>SUBCELLULAR LOCATION</scope>
</reference>
<reference key="17">
    <citation type="journal article" date="2009" name="Sci. Signal.">
        <title>Quantitative phosphoproteomic analysis of T cell receptor signaling reveals system-wide modulation of protein-protein interactions.</title>
        <authorList>
            <person name="Mayya V."/>
            <person name="Lundgren D.H."/>
            <person name="Hwang S.-I."/>
            <person name="Rezaul K."/>
            <person name="Wu L."/>
            <person name="Eng J.K."/>
            <person name="Rodionov V."/>
            <person name="Han D.K."/>
        </authorList>
    </citation>
    <scope>IDENTIFICATION BY MASS SPECTROMETRY [LARGE SCALE ANALYSIS]</scope>
    <source>
        <tissue>Leukemic T-cell</tissue>
    </source>
</reference>
<reference key="18">
    <citation type="journal article" date="2010" name="Sci. Signal.">
        <title>Quantitative phosphoproteomics reveals widespread full phosphorylation site occupancy during mitosis.</title>
        <authorList>
            <person name="Olsen J.V."/>
            <person name="Vermeulen M."/>
            <person name="Santamaria A."/>
            <person name="Kumar C."/>
            <person name="Miller M.L."/>
            <person name="Jensen L.J."/>
            <person name="Gnad F."/>
            <person name="Cox J."/>
            <person name="Jensen T.S."/>
            <person name="Nigg E.A."/>
            <person name="Brunak S."/>
            <person name="Mann M."/>
        </authorList>
    </citation>
    <scope>PHOSPHORYLATION [LARGE SCALE ANALYSIS] AT SER-438</scope>
    <scope>IDENTIFICATION BY MASS SPECTROMETRY [LARGE SCALE ANALYSIS]</scope>
    <source>
        <tissue>Cervix carcinoma</tissue>
    </source>
</reference>
<reference key="19">
    <citation type="journal article" date="2011" name="BMC Syst. Biol.">
        <title>Initial characterization of the human central proteome.</title>
        <authorList>
            <person name="Burkard T.R."/>
            <person name="Planyavsky M."/>
            <person name="Kaupe I."/>
            <person name="Breitwieser F.P."/>
            <person name="Buerckstuemmer T."/>
            <person name="Bennett K.L."/>
            <person name="Superti-Furga G."/>
            <person name="Colinge J."/>
        </authorList>
    </citation>
    <scope>IDENTIFICATION BY MASS SPECTROMETRY [LARGE SCALE ANALYSIS]</scope>
</reference>
<reference key="20">
    <citation type="journal article" date="2011" name="Mol. Pharmacol.">
        <title>Off-target serine/threonine kinase 10 inhibition by erlotinib enhances lymphocytic activity leading to severe skin disorders.</title>
        <authorList>
            <person name="Yamamoto N."/>
            <person name="Honma M."/>
            <person name="Suzuki H."/>
        </authorList>
    </citation>
    <scope>ACTIVITY REGULATION</scope>
</reference>
<reference key="21">
    <citation type="journal article" date="2011" name="Sci. Signal.">
        <title>System-wide temporal characterization of the proteome and phosphoproteome of human embryonic stem cell differentiation.</title>
        <authorList>
            <person name="Rigbolt K.T."/>
            <person name="Prokhorova T.A."/>
            <person name="Akimov V."/>
            <person name="Henningsen J."/>
            <person name="Johansen P.T."/>
            <person name="Kratchmarova I."/>
            <person name="Kassem M."/>
            <person name="Mann M."/>
            <person name="Olsen J.V."/>
            <person name="Blagoev B."/>
        </authorList>
    </citation>
    <scope>IDENTIFICATION BY MASS SPECTROMETRY [LARGE SCALE ANALYSIS]</scope>
</reference>
<reference key="22">
    <citation type="journal article" date="2013" name="J. Proteome Res.">
        <title>Toward a comprehensive characterization of a human cancer cell phosphoproteome.</title>
        <authorList>
            <person name="Zhou H."/>
            <person name="Di Palma S."/>
            <person name="Preisinger C."/>
            <person name="Peng M."/>
            <person name="Polat A.N."/>
            <person name="Heck A.J."/>
            <person name="Mohammed S."/>
        </authorList>
    </citation>
    <scope>PHOSPHORYLATION [LARGE SCALE ANALYSIS] AT SER-13; SER-438; SER-450 AND SER-514</scope>
    <scope>IDENTIFICATION BY MASS SPECTROMETRY [LARGE SCALE ANALYSIS]</scope>
    <source>
        <tissue>Cervix carcinoma</tissue>
        <tissue>Erythroleukemia</tissue>
    </source>
</reference>
<reference key="23">
    <citation type="journal article" date="2014" name="J. Proteomics">
        <title>An enzyme assisted RP-RPLC approach for in-depth analysis of human liver phosphoproteome.</title>
        <authorList>
            <person name="Bian Y."/>
            <person name="Song C."/>
            <person name="Cheng K."/>
            <person name="Dong M."/>
            <person name="Wang F."/>
            <person name="Huang J."/>
            <person name="Sun D."/>
            <person name="Wang L."/>
            <person name="Ye M."/>
            <person name="Zou H."/>
        </authorList>
    </citation>
    <scope>PHOSPHORYLATION [LARGE SCALE ANALYSIS] AT SER-485; SER-514 AND THR-952</scope>
    <scope>IDENTIFICATION BY MASS SPECTROMETRY [LARGE SCALE ANALYSIS]</scope>
    <source>
        <tissue>Liver</tissue>
    </source>
</reference>
<reference evidence="15" key="24">
    <citation type="journal article" date="2008" name="EMBO J.">
        <title>Activation segment dimerization: a mechanism for kinase autophosphorylation of non-consensus sites.</title>
        <authorList>
            <person name="Pike A.C."/>
            <person name="Rellos P."/>
            <person name="Niesen F.H."/>
            <person name="Turnbull A."/>
            <person name="Oliver A.W."/>
            <person name="Parker S.A."/>
            <person name="Turk B.E."/>
            <person name="Pearl L.H."/>
            <person name="Knapp S."/>
        </authorList>
    </citation>
    <scope>X-RAY CRYSTALLOGRAPHY (2.0 ANGSTROMS) OF 18-317 IN COMPLEX WITH PYRROLE-INDOLINONE INHIBITOR</scope>
    <scope>ACTIVITY REGULATION</scope>
    <scope>AUTOPHOSPHORYLATION</scope>
    <scope>CATALYTIC ACTIVITY</scope>
    <scope>SUBUNIT</scope>
</reference>
<reference key="25">
    <citation type="journal article" date="2006" name="Genes Chromosomes Cancer">
        <title>Sequence analysis of the protein kinase gene family in human testicular germ-cell tumors of adolescents and adults.</title>
        <authorList>
            <person name="Bignell G."/>
            <person name="Smith R."/>
            <person name="Hunter C."/>
            <person name="Stephens P."/>
            <person name="Davies H."/>
            <person name="Greenman C."/>
            <person name="Teague J."/>
            <person name="Butler A."/>
            <person name="Edkins S."/>
            <person name="Stevens C."/>
            <person name="O'meara S."/>
            <person name="Parker A."/>
            <person name="Avis T."/>
            <person name="Barthorpe S."/>
            <person name="Brackenbury L."/>
            <person name="Buck G."/>
            <person name="Clements J."/>
            <person name="Cole J."/>
            <person name="Dicks E."/>
            <person name="Edwards K."/>
            <person name="Forbes S."/>
            <person name="Gorton M."/>
            <person name="Gray K."/>
            <person name="Halliday K."/>
            <person name="Harrison R."/>
            <person name="Hills K."/>
            <person name="Hinton J."/>
            <person name="Jones D."/>
            <person name="Kosmidou V."/>
            <person name="Laman R."/>
            <person name="Lugg R."/>
            <person name="Menzies A."/>
            <person name="Perry J."/>
            <person name="Petty R."/>
            <person name="Raine K."/>
            <person name="Shepherd R."/>
            <person name="Small A."/>
            <person name="Solomon H."/>
            <person name="Stephens Y."/>
            <person name="Tofts C."/>
            <person name="Varian J."/>
            <person name="Webb A."/>
            <person name="West S."/>
            <person name="Widaa S."/>
            <person name="Yates A."/>
            <person name="Gillis A.J.M."/>
            <person name="Stoop H.J."/>
            <person name="van Gurp R.J.H.L.M."/>
            <person name="Oosterhuis J.W."/>
            <person name="Looijenga L.H.J."/>
            <person name="Futreal P.A."/>
            <person name="Wooster R."/>
            <person name="Stratton M.R."/>
        </authorList>
    </citation>
    <scope>VARIANT TGCT GLU-277</scope>
</reference>
<reference key="26">
    <citation type="journal article" date="2007" name="Nature">
        <title>Patterns of somatic mutation in human cancer genomes.</title>
        <authorList>
            <person name="Greenman C."/>
            <person name="Stephens P."/>
            <person name="Smith R."/>
            <person name="Dalgliesh G.L."/>
            <person name="Hunter C."/>
            <person name="Bignell G."/>
            <person name="Davies H."/>
            <person name="Teague J."/>
            <person name="Butler A."/>
            <person name="Stevens C."/>
            <person name="Edkins S."/>
            <person name="O'Meara S."/>
            <person name="Vastrik I."/>
            <person name="Schmidt E.E."/>
            <person name="Avis T."/>
            <person name="Barthorpe S."/>
            <person name="Bhamra G."/>
            <person name="Buck G."/>
            <person name="Choudhury B."/>
            <person name="Clements J."/>
            <person name="Cole J."/>
            <person name="Dicks E."/>
            <person name="Forbes S."/>
            <person name="Gray K."/>
            <person name="Halliday K."/>
            <person name="Harrison R."/>
            <person name="Hills K."/>
            <person name="Hinton J."/>
            <person name="Jenkinson A."/>
            <person name="Jones D."/>
            <person name="Menzies A."/>
            <person name="Mironenko T."/>
            <person name="Perry J."/>
            <person name="Raine K."/>
            <person name="Richardson D."/>
            <person name="Shepherd R."/>
            <person name="Small A."/>
            <person name="Tofts C."/>
            <person name="Varian J."/>
            <person name="Webb T."/>
            <person name="West S."/>
            <person name="Widaa S."/>
            <person name="Yates A."/>
            <person name="Cahill D.P."/>
            <person name="Louis D.N."/>
            <person name="Goldstraw P."/>
            <person name="Nicholson A.G."/>
            <person name="Brasseur F."/>
            <person name="Looijenga L."/>
            <person name="Weber B.L."/>
            <person name="Chiew Y.-E."/>
            <person name="DeFazio A."/>
            <person name="Greaves M.F."/>
            <person name="Green A.R."/>
            <person name="Campbell P."/>
            <person name="Birney E."/>
            <person name="Easton D.F."/>
            <person name="Chenevix-Trench G."/>
            <person name="Tan M.-H."/>
            <person name="Khoo S.K."/>
            <person name="Teh B.T."/>
            <person name="Yuen S.T."/>
            <person name="Leung S.Y."/>
            <person name="Wooster R."/>
            <person name="Futreal P.A."/>
            <person name="Stratton M.R."/>
        </authorList>
    </citation>
    <scope>VARIANTS [LARGE SCALE ANALYSIS] CYS-268; GLU-277; TRP-322; ILE-336; SER-467; THR-710; LEU-853; THR-905 AND TYR-947</scope>
</reference>
<name>STK10_HUMAN</name>
<proteinExistence type="evidence at protein level"/>
<feature type="chain" id="PRO_0000086697" description="Serine/threonine-protein kinase 10">
    <location>
        <begin position="1"/>
        <end position="968"/>
    </location>
</feature>
<feature type="domain" description="Protein kinase" evidence="3">
    <location>
        <begin position="36"/>
        <end position="294"/>
    </location>
</feature>
<feature type="region of interest" description="Activation segment">
    <location>
        <begin position="175"/>
        <end position="224"/>
    </location>
</feature>
<feature type="region of interest" description="Disordered" evidence="5">
    <location>
        <begin position="337"/>
        <end position="411"/>
    </location>
</feature>
<feature type="region of interest" description="Disordered" evidence="5">
    <location>
        <begin position="425"/>
        <end position="490"/>
    </location>
</feature>
<feature type="region of interest" description="Disordered" evidence="5">
    <location>
        <begin position="668"/>
        <end position="690"/>
    </location>
</feature>
<feature type="region of interest" description="Disordered" evidence="5">
    <location>
        <begin position="827"/>
        <end position="865"/>
    </location>
</feature>
<feature type="region of interest" description="Disordered" evidence="5">
    <location>
        <begin position="910"/>
        <end position="929"/>
    </location>
</feature>
<feature type="region of interest" description="Disordered" evidence="5">
    <location>
        <begin position="944"/>
        <end position="968"/>
    </location>
</feature>
<feature type="coiled-coil region" evidence="2">
    <location>
        <begin position="573"/>
        <end position="947"/>
    </location>
</feature>
<feature type="compositionally biased region" description="Polar residues" evidence="5">
    <location>
        <begin position="337"/>
        <end position="351"/>
    </location>
</feature>
<feature type="compositionally biased region" description="Polar residues" evidence="5">
    <location>
        <begin position="361"/>
        <end position="393"/>
    </location>
</feature>
<feature type="compositionally biased region" description="Polar residues" evidence="5">
    <location>
        <begin position="441"/>
        <end position="457"/>
    </location>
</feature>
<feature type="compositionally biased region" description="Basic and acidic residues" evidence="5">
    <location>
        <begin position="835"/>
        <end position="865"/>
    </location>
</feature>
<feature type="active site" description="Proton acceptor" evidence="3 4">
    <location>
        <position position="157"/>
    </location>
</feature>
<feature type="binding site" evidence="3">
    <location>
        <begin position="42"/>
        <end position="50"/>
    </location>
    <ligand>
        <name>ATP</name>
        <dbReference type="ChEBI" id="CHEBI:30616"/>
    </ligand>
</feature>
<feature type="binding site" evidence="13">
    <location>
        <position position="65"/>
    </location>
    <ligand>
        <name>ATP</name>
        <dbReference type="ChEBI" id="CHEBI:30616"/>
    </ligand>
</feature>
<feature type="modified residue" description="Phosphoserine" evidence="18 23">
    <location>
        <position position="13"/>
    </location>
</feature>
<feature type="modified residue" description="Phosphoserine" evidence="1">
    <location>
        <position position="20"/>
    </location>
</feature>
<feature type="modified residue" description="Phosphoserine" evidence="18 19 21">
    <location>
        <position position="191"/>
    </location>
</feature>
<feature type="modified residue" description="Phosphoserine" evidence="16 17 19 20 21 22 23">
    <location>
        <position position="438"/>
    </location>
</feature>
<feature type="modified residue" description="Phosphoserine" evidence="23">
    <location>
        <position position="450"/>
    </location>
</feature>
<feature type="modified residue" description="Phosphoserine" evidence="18">
    <location>
        <position position="454"/>
    </location>
</feature>
<feature type="modified residue" description="Phosphoserine" evidence="24">
    <location>
        <position position="485"/>
    </location>
</feature>
<feature type="modified residue" description="Phosphoserine" evidence="23 24">
    <location>
        <position position="514"/>
    </location>
</feature>
<feature type="modified residue" description="Phosphoserine" evidence="21">
    <location>
        <position position="549"/>
    </location>
</feature>
<feature type="modified residue" description="Phosphothreonine" evidence="18 24">
    <location>
        <position position="952"/>
    </location>
</feature>
<feature type="sequence variant" id="VAR_041131" description="In dbSNP:rs35826078." evidence="9">
    <original>R</original>
    <variation>C</variation>
    <location>
        <position position="268"/>
    </location>
</feature>
<feature type="sequence variant" id="VAR_023827" description="In TGCT; somatic mutation; dbSNP:rs757545210." evidence="8 9">
    <original>K</original>
    <variation>E</variation>
    <location>
        <position position="277"/>
    </location>
</feature>
<feature type="sequence variant" id="VAR_041132" description="In dbSNP:rs56214442." evidence="9">
    <original>R</original>
    <variation>W</variation>
    <location>
        <position position="322"/>
    </location>
</feature>
<feature type="sequence variant" id="VAR_041133" description="In dbSNP:rs55972616." evidence="9">
    <original>T</original>
    <variation>I</variation>
    <location>
        <position position="336"/>
    </location>
</feature>
<feature type="sequence variant" id="VAR_041134" description="In dbSNP:rs56063773." evidence="9">
    <original>N</original>
    <variation>S</variation>
    <location>
        <position position="467"/>
    </location>
</feature>
<feature type="sequence variant" id="VAR_051671" description="In dbSNP:rs34505340.">
    <original>P</original>
    <variation>L</variation>
    <location>
        <position position="480"/>
    </location>
</feature>
<feature type="sequence variant" id="VAR_051672" description="In dbSNP:rs17074311.">
    <original>P</original>
    <variation>L</variation>
    <location>
        <position position="520"/>
    </location>
</feature>
<feature type="sequence variant" id="VAR_041135" description="In dbSNP:rs34936670." evidence="9">
    <original>M</original>
    <variation>T</variation>
    <location>
        <position position="710"/>
    </location>
</feature>
<feature type="sequence variant" id="VAR_041136" description="In dbSNP:rs56066852." evidence="9">
    <original>S</original>
    <variation>L</variation>
    <location>
        <position position="853"/>
    </location>
</feature>
<feature type="sequence variant" id="VAR_041137" description="In dbSNP:rs55791916." evidence="9">
    <original>S</original>
    <variation>T</variation>
    <location>
        <position position="905"/>
    </location>
</feature>
<feature type="sequence variant" id="VAR_051673" description="In dbSNP:rs1128204.">
    <original>S</original>
    <variation>N</variation>
    <location>
        <position position="942"/>
    </location>
</feature>
<feature type="sequence variant" id="VAR_041138" description="In dbSNP:rs56355550." evidence="9">
    <original>C</original>
    <variation>Y</variation>
    <location>
        <position position="947"/>
    </location>
</feature>
<feature type="mutagenesis site" description="Loss of kinase activity." evidence="7">
    <original>K</original>
    <variation>I</variation>
    <location>
        <position position="65"/>
    </location>
</feature>
<feature type="sequence conflict" description="In Ref. 5; AAH70077." evidence="13" ref="5">
    <original>A</original>
    <variation>V</variation>
    <location>
        <position position="62"/>
    </location>
</feature>
<feature type="sequence conflict" description="In Ref. 5; AAH70077." evidence="13" ref="5">
    <original>V</original>
    <variation>E</variation>
    <location>
        <position position="136"/>
    </location>
</feature>
<feature type="sequence conflict" description="In Ref. 5; AAH70077." evidence="13" ref="5">
    <original>E</original>
    <variation>G</variation>
    <location>
        <position position="317"/>
    </location>
</feature>
<feature type="strand" evidence="27">
    <location>
        <begin position="27"/>
        <end position="30"/>
    </location>
</feature>
<feature type="helix" evidence="25">
    <location>
        <begin position="32"/>
        <end position="34"/>
    </location>
</feature>
<feature type="strand" evidence="25">
    <location>
        <begin position="36"/>
        <end position="41"/>
    </location>
</feature>
<feature type="strand" evidence="26">
    <location>
        <begin position="45"/>
        <end position="47"/>
    </location>
</feature>
<feature type="strand" evidence="25">
    <location>
        <begin position="50"/>
        <end position="55"/>
    </location>
</feature>
<feature type="turn" evidence="25">
    <location>
        <begin position="56"/>
        <end position="58"/>
    </location>
</feature>
<feature type="strand" evidence="25">
    <location>
        <begin position="61"/>
        <end position="68"/>
    </location>
</feature>
<feature type="helix" evidence="25">
    <location>
        <begin position="72"/>
        <end position="87"/>
    </location>
</feature>
<feature type="strand" evidence="25">
    <location>
        <begin position="96"/>
        <end position="102"/>
    </location>
</feature>
<feature type="strand" evidence="25">
    <location>
        <begin position="105"/>
        <end position="111"/>
    </location>
</feature>
<feature type="helix" evidence="25">
    <location>
        <begin position="118"/>
        <end position="125"/>
    </location>
</feature>
<feature type="helix" evidence="25">
    <location>
        <begin position="131"/>
        <end position="150"/>
    </location>
</feature>
<feature type="helix" evidence="25">
    <location>
        <begin position="160"/>
        <end position="162"/>
    </location>
</feature>
<feature type="strand" evidence="25">
    <location>
        <begin position="163"/>
        <end position="165"/>
    </location>
</feature>
<feature type="strand" evidence="25">
    <location>
        <begin position="171"/>
        <end position="173"/>
    </location>
</feature>
<feature type="helix" evidence="25">
    <location>
        <begin position="180"/>
        <end position="187"/>
    </location>
</feature>
<feature type="helix" evidence="25">
    <location>
        <begin position="196"/>
        <end position="198"/>
    </location>
</feature>
<feature type="helix" evidence="25">
    <location>
        <begin position="201"/>
        <end position="207"/>
    </location>
</feature>
<feature type="turn" evidence="25">
    <location>
        <begin position="208"/>
        <end position="211"/>
    </location>
</feature>
<feature type="helix" evidence="25">
    <location>
        <begin position="213"/>
        <end position="216"/>
    </location>
</feature>
<feature type="helix" evidence="25">
    <location>
        <begin position="217"/>
        <end position="232"/>
    </location>
</feature>
<feature type="turn" evidence="25">
    <location>
        <begin position="236"/>
        <end position="239"/>
    </location>
</feature>
<feature type="helix" evidence="25">
    <location>
        <begin position="242"/>
        <end position="251"/>
    </location>
</feature>
<feature type="helix" evidence="25">
    <location>
        <begin position="260"/>
        <end position="262"/>
    </location>
</feature>
<feature type="helix" evidence="25">
    <location>
        <begin position="265"/>
        <end position="274"/>
    </location>
</feature>
<feature type="turn" evidence="25">
    <location>
        <begin position="279"/>
        <end position="281"/>
    </location>
</feature>
<feature type="helix" evidence="25">
    <location>
        <begin position="285"/>
        <end position="288"/>
    </location>
</feature>
<feature type="turn" evidence="25">
    <location>
        <begin position="292"/>
        <end position="296"/>
    </location>
</feature>
<feature type="helix" evidence="25">
    <location>
        <begin position="301"/>
        <end position="314"/>
    </location>
</feature>